<protein>
    <recommendedName>
        <fullName evidence="1">Probable bifunctional tRNA threonylcarbamoyladenosine biosynthesis protein</fullName>
    </recommendedName>
    <domain>
        <recommendedName>
            <fullName evidence="1">tRNA N6-adenosine threonylcarbamoyltransferase</fullName>
            <ecNumber evidence="1">2.3.1.234</ecNumber>
        </recommendedName>
        <alternativeName>
            <fullName>N6-L-threonylcarbamoyladenine synthase</fullName>
            <shortName>t(6)A synthase</shortName>
        </alternativeName>
        <alternativeName>
            <fullName evidence="1">t(6)A37 threonylcarbamoyladenosine biosynthesis protein Kae1</fullName>
        </alternativeName>
        <alternativeName>
            <fullName evidence="1">tRNA threonylcarbamoyladenosine biosynthesis protein Kae1</fullName>
        </alternativeName>
    </domain>
    <domain>
        <recommendedName>
            <fullName evidence="1">Serine/threonine-protein kinase Bud32</fullName>
            <ecNumber evidence="1">2.7.11.1</ecNumber>
        </recommendedName>
    </domain>
</protein>
<keyword id="KW-0012">Acyltransferase</keyword>
<keyword id="KW-0067">ATP-binding</keyword>
<keyword id="KW-0963">Cytoplasm</keyword>
<keyword id="KW-0408">Iron</keyword>
<keyword id="KW-0418">Kinase</keyword>
<keyword id="KW-0479">Metal-binding</keyword>
<keyword id="KW-0511">Multifunctional enzyme</keyword>
<keyword id="KW-0547">Nucleotide-binding</keyword>
<keyword id="KW-0723">Serine/threonine-protein kinase</keyword>
<keyword id="KW-0808">Transferase</keyword>
<keyword id="KW-0819">tRNA processing</keyword>
<feature type="chain" id="PRO_0000303653" description="Probable bifunctional tRNA threonylcarbamoyladenosine biosynthesis protein">
    <location>
        <begin position="1"/>
        <end position="527"/>
    </location>
</feature>
<feature type="domain" description="Protein kinase" evidence="1">
    <location>
        <begin position="333"/>
        <end position="527"/>
    </location>
</feature>
<feature type="region of interest" description="Kae1">
    <location>
        <begin position="1"/>
        <end position="323"/>
    </location>
</feature>
<feature type="active site" description="Proton acceptor; for kinase activity" evidence="1">
    <location>
        <position position="444"/>
    </location>
</feature>
<feature type="binding site" evidence="1">
    <location>
        <position position="110"/>
    </location>
    <ligand>
        <name>Fe cation</name>
        <dbReference type="ChEBI" id="CHEBI:24875"/>
    </ligand>
</feature>
<feature type="binding site" evidence="1">
    <location>
        <position position="114"/>
    </location>
    <ligand>
        <name>Fe cation</name>
        <dbReference type="ChEBI" id="CHEBI:24875"/>
    </ligand>
</feature>
<feature type="binding site" evidence="1">
    <location>
        <begin position="131"/>
        <end position="135"/>
    </location>
    <ligand>
        <name>L-threonylcarbamoyladenylate</name>
        <dbReference type="ChEBI" id="CHEBI:73682"/>
    </ligand>
</feature>
<feature type="binding site" evidence="1">
    <location>
        <position position="131"/>
    </location>
    <ligand>
        <name>Fe cation</name>
        <dbReference type="ChEBI" id="CHEBI:24875"/>
    </ligand>
</feature>
<feature type="binding site" evidence="1">
    <location>
        <position position="163"/>
    </location>
    <ligand>
        <name>L-threonylcarbamoyladenylate</name>
        <dbReference type="ChEBI" id="CHEBI:73682"/>
    </ligand>
</feature>
<feature type="binding site" evidence="1">
    <location>
        <position position="176"/>
    </location>
    <ligand>
        <name>L-threonylcarbamoyladenylate</name>
        <dbReference type="ChEBI" id="CHEBI:73682"/>
    </ligand>
</feature>
<feature type="binding site" evidence="1">
    <location>
        <position position="180"/>
    </location>
    <ligand>
        <name>L-threonylcarbamoyladenylate</name>
        <dbReference type="ChEBI" id="CHEBI:73682"/>
    </ligand>
</feature>
<feature type="binding site" evidence="1">
    <location>
        <position position="256"/>
    </location>
    <ligand>
        <name>L-threonylcarbamoyladenylate</name>
        <dbReference type="ChEBI" id="CHEBI:73682"/>
    </ligand>
</feature>
<feature type="binding site" evidence="1">
    <location>
        <position position="284"/>
    </location>
    <ligand>
        <name>Fe cation</name>
        <dbReference type="ChEBI" id="CHEBI:24875"/>
    </ligand>
</feature>
<feature type="binding site" evidence="1">
    <location>
        <begin position="340"/>
        <end position="348"/>
    </location>
    <ligand>
        <name>ATP</name>
        <dbReference type="ChEBI" id="CHEBI:30616"/>
    </ligand>
</feature>
<feature type="binding site" evidence="1">
    <location>
        <position position="357"/>
    </location>
    <ligand>
        <name>ATP</name>
        <dbReference type="ChEBI" id="CHEBI:30616"/>
    </ligand>
</feature>
<proteinExistence type="inferred from homology"/>
<dbReference type="EC" id="2.3.1.234" evidence="1"/>
<dbReference type="EC" id="2.7.11.1" evidence="1"/>
<dbReference type="EMBL" id="CP000562">
    <property type="protein sequence ID" value="ABN58170.1"/>
    <property type="molecule type" value="Genomic_DNA"/>
</dbReference>
<dbReference type="RefSeq" id="WP_011845079.1">
    <property type="nucleotide sequence ID" value="NC_009051.1"/>
</dbReference>
<dbReference type="SMR" id="A3CXS0"/>
<dbReference type="STRING" id="368407.Memar_2247"/>
<dbReference type="GeneID" id="4846608"/>
<dbReference type="KEGG" id="mem:Memar_2247"/>
<dbReference type="eggNOG" id="arCOG01183">
    <property type="taxonomic scope" value="Archaea"/>
</dbReference>
<dbReference type="eggNOG" id="arCOG01185">
    <property type="taxonomic scope" value="Archaea"/>
</dbReference>
<dbReference type="HOGENOM" id="CLU_023208_2_2_2"/>
<dbReference type="OrthoDB" id="6818at2157"/>
<dbReference type="Proteomes" id="UP000002146">
    <property type="component" value="Chromosome"/>
</dbReference>
<dbReference type="GO" id="GO:0005737">
    <property type="term" value="C:cytoplasm"/>
    <property type="evidence" value="ECO:0007669"/>
    <property type="project" value="UniProtKB-SubCell"/>
</dbReference>
<dbReference type="GO" id="GO:0000408">
    <property type="term" value="C:EKC/KEOPS complex"/>
    <property type="evidence" value="ECO:0007669"/>
    <property type="project" value="InterPro"/>
</dbReference>
<dbReference type="GO" id="GO:0005524">
    <property type="term" value="F:ATP binding"/>
    <property type="evidence" value="ECO:0007669"/>
    <property type="project" value="UniProtKB-UniRule"/>
</dbReference>
<dbReference type="GO" id="GO:0005506">
    <property type="term" value="F:iron ion binding"/>
    <property type="evidence" value="ECO:0007669"/>
    <property type="project" value="UniProtKB-UniRule"/>
</dbReference>
<dbReference type="GO" id="GO:0004222">
    <property type="term" value="F:metalloendopeptidase activity"/>
    <property type="evidence" value="ECO:0007669"/>
    <property type="project" value="InterPro"/>
</dbReference>
<dbReference type="GO" id="GO:0061711">
    <property type="term" value="F:N(6)-L-threonylcarbamoyladenine synthase activity"/>
    <property type="evidence" value="ECO:0007669"/>
    <property type="project" value="UniProtKB-EC"/>
</dbReference>
<dbReference type="GO" id="GO:0106310">
    <property type="term" value="F:protein serine kinase activity"/>
    <property type="evidence" value="ECO:0007669"/>
    <property type="project" value="RHEA"/>
</dbReference>
<dbReference type="GO" id="GO:0004674">
    <property type="term" value="F:protein serine/threonine kinase activity"/>
    <property type="evidence" value="ECO:0007669"/>
    <property type="project" value="UniProtKB-KW"/>
</dbReference>
<dbReference type="GO" id="GO:0004712">
    <property type="term" value="F:protein serine/threonine/tyrosine kinase activity"/>
    <property type="evidence" value="ECO:0007669"/>
    <property type="project" value="UniProtKB-UniRule"/>
</dbReference>
<dbReference type="GO" id="GO:0008270">
    <property type="term" value="F:zinc ion binding"/>
    <property type="evidence" value="ECO:0007669"/>
    <property type="project" value="InterPro"/>
</dbReference>
<dbReference type="GO" id="GO:0002949">
    <property type="term" value="P:tRNA threonylcarbamoyladenosine modification"/>
    <property type="evidence" value="ECO:0007669"/>
    <property type="project" value="UniProtKB-UniRule"/>
</dbReference>
<dbReference type="FunFam" id="3.30.420.40:FF:000038">
    <property type="entry name" value="Probable tRNA N6-adenosine threonylcarbamoyltransferase"/>
    <property type="match status" value="1"/>
</dbReference>
<dbReference type="Gene3D" id="3.30.420.40">
    <property type="match status" value="2"/>
</dbReference>
<dbReference type="Gene3D" id="3.30.200.20">
    <property type="entry name" value="Phosphorylase Kinase, domain 1"/>
    <property type="match status" value="1"/>
</dbReference>
<dbReference type="Gene3D" id="1.10.510.10">
    <property type="entry name" value="Transferase(Phosphotransferase) domain 1"/>
    <property type="match status" value="1"/>
</dbReference>
<dbReference type="HAMAP" id="MF_01446">
    <property type="entry name" value="Kae1"/>
    <property type="match status" value="1"/>
</dbReference>
<dbReference type="HAMAP" id="MF_01447">
    <property type="entry name" value="Kae1_Bud32_arch"/>
    <property type="match status" value="1"/>
</dbReference>
<dbReference type="InterPro" id="IPR043129">
    <property type="entry name" value="ATPase_NBD"/>
</dbReference>
<dbReference type="InterPro" id="IPR022495">
    <property type="entry name" value="Bud32"/>
</dbReference>
<dbReference type="InterPro" id="IPR000905">
    <property type="entry name" value="Gcp-like_dom"/>
</dbReference>
<dbReference type="InterPro" id="IPR017861">
    <property type="entry name" value="KAE1/TsaD"/>
</dbReference>
<dbReference type="InterPro" id="IPR034680">
    <property type="entry name" value="Kae1_archaea_euk"/>
</dbReference>
<dbReference type="InterPro" id="IPR011009">
    <property type="entry name" value="Kinase-like_dom_sf"/>
</dbReference>
<dbReference type="InterPro" id="IPR017860">
    <property type="entry name" value="Peptidase_M22_CS"/>
</dbReference>
<dbReference type="InterPro" id="IPR018934">
    <property type="entry name" value="RIO_dom"/>
</dbReference>
<dbReference type="InterPro" id="IPR009220">
    <property type="entry name" value="tRNA_threonyl_synthase/kinase"/>
</dbReference>
<dbReference type="InterPro" id="IPR008266">
    <property type="entry name" value="Tyr_kinase_AS"/>
</dbReference>
<dbReference type="NCBIfam" id="TIGR03724">
    <property type="entry name" value="arch_bud32"/>
    <property type="match status" value="1"/>
</dbReference>
<dbReference type="NCBIfam" id="TIGR03722">
    <property type="entry name" value="arch_KAE1"/>
    <property type="match status" value="1"/>
</dbReference>
<dbReference type="NCBIfam" id="TIGR00329">
    <property type="entry name" value="gcp_kae1"/>
    <property type="match status" value="1"/>
</dbReference>
<dbReference type="NCBIfam" id="NF007174">
    <property type="entry name" value="PRK09605.1"/>
    <property type="match status" value="1"/>
</dbReference>
<dbReference type="NCBIfam" id="NF011462">
    <property type="entry name" value="PRK14879.1-3"/>
    <property type="match status" value="1"/>
</dbReference>
<dbReference type="PANTHER" id="PTHR11735">
    <property type="entry name" value="TRNA N6-ADENOSINE THREONYLCARBAMOYLTRANSFERASE"/>
    <property type="match status" value="1"/>
</dbReference>
<dbReference type="PANTHER" id="PTHR11735:SF14">
    <property type="entry name" value="TRNA N6-ADENOSINE THREONYLCARBAMOYLTRANSFERASE"/>
    <property type="match status" value="1"/>
</dbReference>
<dbReference type="Pfam" id="PF01163">
    <property type="entry name" value="RIO1"/>
    <property type="match status" value="1"/>
</dbReference>
<dbReference type="Pfam" id="PF00814">
    <property type="entry name" value="TsaD"/>
    <property type="match status" value="1"/>
</dbReference>
<dbReference type="PIRSF" id="PIRSF036401">
    <property type="entry name" value="Gcp_STYKS"/>
    <property type="match status" value="1"/>
</dbReference>
<dbReference type="PRINTS" id="PR00789">
    <property type="entry name" value="OSIALOPTASE"/>
</dbReference>
<dbReference type="SUPFAM" id="SSF53067">
    <property type="entry name" value="Actin-like ATPase domain"/>
    <property type="match status" value="1"/>
</dbReference>
<dbReference type="SUPFAM" id="SSF56112">
    <property type="entry name" value="Protein kinase-like (PK-like)"/>
    <property type="match status" value="1"/>
</dbReference>
<dbReference type="PROSITE" id="PS01016">
    <property type="entry name" value="GLYCOPROTEASE"/>
    <property type="match status" value="1"/>
</dbReference>
<dbReference type="PROSITE" id="PS00109">
    <property type="entry name" value="PROTEIN_KINASE_TYR"/>
    <property type="match status" value="1"/>
</dbReference>
<comment type="function">
    <text evidence="1">Required for the formation of a threonylcarbamoyl group on adenosine at position 37 (t(6)A37) in tRNAs that read codons beginning with adenine. Is a component of the KEOPS complex that is probably involved in the transfer of the threonylcarbamoyl moiety of threonylcarbamoyl-AMP (TC-AMP) to the N6 group of A37. The Kae1 domain likely plays a direct catalytic role in this reaction. The Bud32 domain probably displays kinase activity that regulates Kae1 function.</text>
</comment>
<comment type="catalytic activity">
    <reaction evidence="1">
        <text>L-seryl-[protein] + ATP = O-phospho-L-seryl-[protein] + ADP + H(+)</text>
        <dbReference type="Rhea" id="RHEA:17989"/>
        <dbReference type="Rhea" id="RHEA-COMP:9863"/>
        <dbReference type="Rhea" id="RHEA-COMP:11604"/>
        <dbReference type="ChEBI" id="CHEBI:15378"/>
        <dbReference type="ChEBI" id="CHEBI:29999"/>
        <dbReference type="ChEBI" id="CHEBI:30616"/>
        <dbReference type="ChEBI" id="CHEBI:83421"/>
        <dbReference type="ChEBI" id="CHEBI:456216"/>
        <dbReference type="EC" id="2.7.11.1"/>
    </reaction>
</comment>
<comment type="catalytic activity">
    <reaction evidence="1">
        <text>L-threonyl-[protein] + ATP = O-phospho-L-threonyl-[protein] + ADP + H(+)</text>
        <dbReference type="Rhea" id="RHEA:46608"/>
        <dbReference type="Rhea" id="RHEA-COMP:11060"/>
        <dbReference type="Rhea" id="RHEA-COMP:11605"/>
        <dbReference type="ChEBI" id="CHEBI:15378"/>
        <dbReference type="ChEBI" id="CHEBI:30013"/>
        <dbReference type="ChEBI" id="CHEBI:30616"/>
        <dbReference type="ChEBI" id="CHEBI:61977"/>
        <dbReference type="ChEBI" id="CHEBI:456216"/>
        <dbReference type="EC" id="2.7.11.1"/>
    </reaction>
</comment>
<comment type="catalytic activity">
    <reaction evidence="1">
        <text>L-threonylcarbamoyladenylate + adenosine(37) in tRNA = N(6)-L-threonylcarbamoyladenosine(37) in tRNA + AMP + H(+)</text>
        <dbReference type="Rhea" id="RHEA:37059"/>
        <dbReference type="Rhea" id="RHEA-COMP:10162"/>
        <dbReference type="Rhea" id="RHEA-COMP:10163"/>
        <dbReference type="ChEBI" id="CHEBI:15378"/>
        <dbReference type="ChEBI" id="CHEBI:73682"/>
        <dbReference type="ChEBI" id="CHEBI:74411"/>
        <dbReference type="ChEBI" id="CHEBI:74418"/>
        <dbReference type="ChEBI" id="CHEBI:456215"/>
        <dbReference type="EC" id="2.3.1.234"/>
    </reaction>
</comment>
<comment type="cofactor">
    <cofactor evidence="1">
        <name>Fe(2+)</name>
        <dbReference type="ChEBI" id="CHEBI:29033"/>
    </cofactor>
    <text evidence="1">Binds 1 Fe(2+) ion per subunit.</text>
</comment>
<comment type="subunit">
    <text evidence="1">Component of the KEOPS complex that consists of Kae1, Bud32, Cgi121 and Pcc1; the whole complex dimerizes.</text>
</comment>
<comment type="subcellular location">
    <subcellularLocation>
        <location evidence="1">Cytoplasm</location>
    </subcellularLocation>
</comment>
<comment type="similarity">
    <text evidence="1">In the N-terminal section; belongs to the KAE1 / TsaD family.</text>
</comment>
<comment type="similarity">
    <text evidence="1">In the C-terminal section; belongs to the protein kinase superfamily. Tyr protein kinase family. BUD32 subfamily.</text>
</comment>
<accession>A3CXS0</accession>
<sequence length="527" mass="56729">MPDIMPDDGLVLGLEGTAWNLSAALFGDDLVALHSSPYVPPKGGIHPREAAQHHASAMKEVVSRVLTEPERIRAVAFSQGPGLGPSLRTVATAARALSIALDVPLVGVNHCVAHVEIGRWATGFSDPIVLYASGANTQVLGYLNGRYRIFGETLDIGLGNGLDKFARSHDLPHPGGPAIERLAREGNYIELPYTVKGMDLAFSGLVSAAQESSAPLEDVCFGLQETAFAMCVEVTERALAHAGKDEVLLVGGVGANGRLQEMLRVMCEERGAAFAVPERTFLGDNGAMIAYTGKIMLEHGVVLPLDQSQIRPGYRADEVEVAWRTEPGEVFSIGPHEGGVARGAEAVVEIGEGNVIKRRTGKRYRYPALDRRLIAERTRAEARLIATARRAGVPTPVIRDITADTIVMERIKGEVLKYVTAPETIRLAGEAVGRLHGTGIVHGDLTTSNMIVRDGQCVLIDFGLASTSSEVESRGVDLHVFFQTLESTTENFQELKEAFVEGYTAVFPGAGEVLAREHEVELRGRYL</sequence>
<name>KAE1B_METMJ</name>
<organism>
    <name type="scientific">Methanoculleus marisnigri (strain ATCC 35101 / DSM 1498 / JR1)</name>
    <dbReference type="NCBI Taxonomy" id="368407"/>
    <lineage>
        <taxon>Archaea</taxon>
        <taxon>Methanobacteriati</taxon>
        <taxon>Methanobacteriota</taxon>
        <taxon>Stenosarchaea group</taxon>
        <taxon>Methanomicrobia</taxon>
        <taxon>Methanomicrobiales</taxon>
        <taxon>Methanomicrobiaceae</taxon>
        <taxon>Methanoculleus</taxon>
    </lineage>
</organism>
<gene>
    <name type="ordered locus">Memar_2247</name>
</gene>
<reference key="1">
    <citation type="journal article" date="2009" name="Stand. Genomic Sci.">
        <title>Complete genome sequence of Methanoculleus marisnigri Romesser et al. 1981 type strain JR1.</title>
        <authorList>
            <person name="Anderson I.J."/>
            <person name="Sieprawska-Lupa M."/>
            <person name="Lapidus A."/>
            <person name="Nolan M."/>
            <person name="Copeland A."/>
            <person name="Glavina Del Rio T."/>
            <person name="Tice H."/>
            <person name="Dalin E."/>
            <person name="Barry K."/>
            <person name="Saunders E."/>
            <person name="Han C."/>
            <person name="Brettin T."/>
            <person name="Detter J.C."/>
            <person name="Bruce D."/>
            <person name="Mikhailova N."/>
            <person name="Pitluck S."/>
            <person name="Hauser L."/>
            <person name="Land M."/>
            <person name="Lucas S."/>
            <person name="Richardson P."/>
            <person name="Whitman W.B."/>
            <person name="Kyrpides N.C."/>
        </authorList>
    </citation>
    <scope>NUCLEOTIDE SEQUENCE [LARGE SCALE GENOMIC DNA]</scope>
    <source>
        <strain>ATCC 35101 / DSM 1498 / JR1</strain>
    </source>
</reference>
<evidence type="ECO:0000255" key="1">
    <source>
        <dbReference type="HAMAP-Rule" id="MF_01447"/>
    </source>
</evidence>